<protein>
    <recommendedName>
        <fullName evidence="6 7">Aminoglycoside nucleotidyltransferase (4')</fullName>
        <shortName evidence="6 7">ANT(4')</shortName>
        <ecNumber evidence="1 2 3">2.7.7.-</ecNumber>
    </recommendedName>
    <alternativeName>
        <fullName evidence="8">Kanamycin nucleotidyltransferase</fullName>
        <shortName>KNTase</shortName>
        <shortName>Neo(R)</shortName>
    </alternativeName>
</protein>
<reference evidence="13" key="1">
    <citation type="journal article" date="1984" name="J. Bacteriol.">
        <title>Enzymatic and nucleotide sequence studies of a kanamycin-inactivating enzyme encoded by a plasmid from thermophilic bacilli in comparison with that encoded by plasmid pUB110.</title>
        <authorList>
            <person name="Matsumura M."/>
            <person name="Katakura Y."/>
            <person name="Imanaka T."/>
            <person name="Aiba S."/>
        </authorList>
    </citation>
    <scope>NUCLEOTIDE SEQUENCE [GENOMIC DNA]</scope>
    <scope>PROTEIN SEQUENCE OF 1-7</scope>
    <scope>FUNCTION</scope>
    <scope>CATALYTIC ACTIVITY</scope>
    <scope>BIOPHYSICOCHEMICAL PROPERTIES</scope>
    <source>
        <plasmid>pUB110</plasmid>
    </source>
</reference>
<reference key="2">
    <citation type="journal article" date="1986" name="Mol. Gen. Genet.">
        <title>Complete nucleotide sequences of Bacillus plasmids pUB110dB, pRBH1 and its copy mutants.</title>
        <authorList>
            <person name="Mueller R.E."/>
            <person name="Ano T."/>
            <person name="Imanaka T."/>
            <person name="Aiba S."/>
        </authorList>
    </citation>
    <scope>NUCLEOTIDE SEQUENCE [GENOMIC DNA]</scope>
    <source>
        <plasmid>pUB110</plasmid>
    </source>
</reference>
<reference evidence="12" key="3">
    <citation type="journal article" date="1986" name="Genetika">
        <title>Nucleotide sequence and physical map of kanamycin-resistant plasmid pUB110 from Staphylococcus aureus.</title>
        <authorList>
            <person name="Bashkirov V.I."/>
            <person name="Mil'Shina N.V."/>
            <person name="Prozorov A.A."/>
        </authorList>
    </citation>
    <scope>NUCLEOTIDE SEQUENCE [GENOMIC DNA]</scope>
    <source>
        <plasmid>pUB110</plasmid>
    </source>
</reference>
<reference evidence="11" key="4">
    <citation type="journal article" date="1986" name="Plasmid">
        <title>The nucleotide sequence of pUB110: some salient features in relation to replication and its regulation.</title>
        <authorList>
            <person name="McKenzie T."/>
            <person name="Hoshino T."/>
            <person name="Tanaka T."/>
            <person name="Sueoka N."/>
        </authorList>
    </citation>
    <scope>NUCLEOTIDE SEQUENCE [GENOMIC DNA]</scope>
    <source>
        <plasmid>pUB110</plasmid>
    </source>
</reference>
<reference key="5">
    <citation type="journal article" date="1987" name="Plasmid">
        <title>Correction. A revision of the nucleotide sequence and functional map of pUB110.</title>
        <authorList>
            <person name="McKenzie T."/>
            <person name="Hoshino T."/>
            <person name="Tanaka T."/>
            <person name="Sueoka N."/>
        </authorList>
    </citation>
    <scope>SEQUENCE REVISION</scope>
</reference>
<reference key="6">
    <citation type="journal article" date="2010" name="Biochem. Biophys. Res. Commun.">
        <title>Dissecting the cosubstrate structure requirements of the Staphylococcus aureus aminoglycoside resistance enzyme ANT(4').</title>
        <authorList>
            <person name="Porter V.R."/>
            <person name="Green K.D."/>
            <person name="Zolova O.E."/>
            <person name="Houghton J.L."/>
            <person name="Garneau-Tsodikova S."/>
        </authorList>
    </citation>
    <scope>FUNCTION</scope>
    <scope>SUBSTRATE SPECIFICITY</scope>
    <scope>CATALYTIC ACTIVITY</scope>
    <scope>BIOPHYSICOCHEMICAL PROPERTIES</scope>
</reference>
<reference evidence="15" key="7">
    <citation type="journal article" date="1993" name="Biochemistry">
        <title>Molecular structure of kanamycin nucleotidyltransferase determined to 3.0-A resolution.</title>
        <authorList>
            <person name="Sakon J."/>
            <person name="Liao H.H."/>
            <person name="Kanikula A.M."/>
            <person name="Benning M.M."/>
            <person name="Rayment I."/>
            <person name="Holden H.M."/>
        </authorList>
    </citation>
    <scope>X-RAY CRYSTALLOGRAPHY (3.0 ANGSTROMS) OF MUTATED ENZYME</scope>
    <scope>SUBUNIT</scope>
    <scope>DOMAIN</scope>
    <scope>MUTAGENESIS OF ASP-80 AND THR-130</scope>
</reference>
<reference evidence="16" key="8">
    <citation type="journal article" date="1995" name="Biochemistry">
        <title>Structural investigation of the antibiotic and ATP-binding sites in kanamycin nucleotidyltransferase.</title>
        <authorList>
            <person name="Pedersen L.C."/>
            <person name="Benning M.M."/>
            <person name="Holden H.M."/>
        </authorList>
    </citation>
    <scope>X-RAY CRYSTALLOGRAPHY (2.5 ANGSTROMS) IN COMPLEX WITH KANAMYCIN; ATP ANALOG AND MG(2+)</scope>
    <scope>PROBABLE ACTIVE SITE</scope>
    <scope>SUBUNIT</scope>
    <scope>DOMAIN</scope>
</reference>
<reference evidence="17 21 22" key="9">
    <citation type="submission" date="2019-01" db="PDB data bank">
        <title>Catch and release: A novel variation of the archetypal nucleotidyl transfer reaction.</title>
        <authorList>
            <person name="Selvaraj B."/>
            <person name="Cuneo M.J."/>
        </authorList>
    </citation>
    <scope>X-RAY CRYSTALLOGRAPHY (1.80 ANGSTROMS) IN COMPLEX WITH MG(2+)</scope>
</reference>
<reference evidence="18 19 20 23 24 25 26" key="10">
    <citation type="journal article" date="2020" name="ACS Catal.">
        <title>'Catch and Release': A Variation of the Archetypal Nucleotidyl Transfer Reaction.</title>
        <authorList>
            <person name="Selvaraj B."/>
            <person name="Kocaman S."/>
            <person name="Trifas M."/>
            <person name="Serpersu E.H."/>
            <person name="Cuneo M.J."/>
        </authorList>
    </citation>
    <scope>X-RAY CRYSTALLOGRAPHY (1.65 ANGSTROMS) IN COMPLEX WITH NEOMYCIN B; ATP ANALOG AND MG(2+)</scope>
    <scope>FUNCTION</scope>
    <scope>CATALYTIC ACTIVITY</scope>
    <scope>REACTION MECHANISM</scope>
    <scope>COFACTOR</scope>
    <scope>MUTAGENESIS OF GLU-52 AND THR-130</scope>
</reference>
<evidence type="ECO:0000269" key="1">
    <source>
    </source>
</evidence>
<evidence type="ECO:0000269" key="2">
    <source>
    </source>
</evidence>
<evidence type="ECO:0000269" key="3">
    <source>
    </source>
</evidence>
<evidence type="ECO:0000269" key="4">
    <source>
    </source>
</evidence>
<evidence type="ECO:0000269" key="5">
    <source>
    </source>
</evidence>
<evidence type="ECO:0000303" key="6">
    <source>
    </source>
</evidence>
<evidence type="ECO:0000303" key="7">
    <source>
    </source>
</evidence>
<evidence type="ECO:0000303" key="8">
    <source>
    </source>
</evidence>
<evidence type="ECO:0000305" key="9"/>
<evidence type="ECO:0000305" key="10">
    <source>
    </source>
</evidence>
<evidence type="ECO:0000312" key="11">
    <source>
        <dbReference type="EMBL" id="AAA88361.1"/>
    </source>
</evidence>
<evidence type="ECO:0000312" key="12">
    <source>
        <dbReference type="EMBL" id="AAA98214.1"/>
    </source>
</evidence>
<evidence type="ECO:0000312" key="13">
    <source>
        <dbReference type="EMBL" id="CAA27142.1"/>
    </source>
</evidence>
<evidence type="ECO:0000312" key="14">
    <source>
        <dbReference type="PDB" id="1KNY"/>
    </source>
</evidence>
<evidence type="ECO:0007744" key="15">
    <source>
        <dbReference type="PDB" id="1KAN"/>
    </source>
</evidence>
<evidence type="ECO:0007744" key="16">
    <source>
        <dbReference type="PDB" id="1KNY"/>
    </source>
</evidence>
<evidence type="ECO:0007744" key="17">
    <source>
        <dbReference type="PDB" id="6NLT"/>
    </source>
</evidence>
<evidence type="ECO:0007744" key="18">
    <source>
        <dbReference type="PDB" id="6NMK"/>
    </source>
</evidence>
<evidence type="ECO:0007744" key="19">
    <source>
        <dbReference type="PDB" id="6NML"/>
    </source>
</evidence>
<evidence type="ECO:0007744" key="20">
    <source>
        <dbReference type="PDB" id="6NMM"/>
    </source>
</evidence>
<evidence type="ECO:0007744" key="21">
    <source>
        <dbReference type="PDB" id="6NMN"/>
    </source>
</evidence>
<evidence type="ECO:0007744" key="22">
    <source>
        <dbReference type="PDB" id="6P01"/>
    </source>
</evidence>
<evidence type="ECO:0007744" key="23">
    <source>
        <dbReference type="PDB" id="6P04"/>
    </source>
</evidence>
<evidence type="ECO:0007744" key="24">
    <source>
        <dbReference type="PDB" id="6P06"/>
    </source>
</evidence>
<evidence type="ECO:0007744" key="25">
    <source>
        <dbReference type="PDB" id="6P08"/>
    </source>
</evidence>
<evidence type="ECO:0007744" key="26">
    <source>
        <dbReference type="PDB" id="6UN8"/>
    </source>
</evidence>
<evidence type="ECO:0007829" key="27">
    <source>
        <dbReference type="PDB" id="6UN8"/>
    </source>
</evidence>
<geneLocation type="plasmid">
    <name>pUB110</name>
</geneLocation>
<feature type="chain" id="PRO_0000068568" description="Aminoglycoside nucleotidyltransferase (4')">
    <location>
        <begin position="1"/>
        <end position="253"/>
    </location>
</feature>
<feature type="region of interest" description="N-terminal domain" evidence="4 5">
    <location>
        <begin position="1"/>
        <end position="127"/>
    </location>
</feature>
<feature type="region of interest" description="C-terminal domain" evidence="4 5">
    <location>
        <begin position="128"/>
        <end position="241"/>
    </location>
</feature>
<feature type="active site" description="Proton acceptor" evidence="10">
    <location>
        <position position="145"/>
    </location>
</feature>
<feature type="binding site" evidence="10 14 24">
    <location>
        <position position="39"/>
    </location>
    <ligand>
        <name>ATP</name>
        <dbReference type="ChEBI" id="CHEBI:30616"/>
    </ligand>
</feature>
<feature type="binding site" evidence="10 14 24">
    <location>
        <position position="42"/>
    </location>
    <ligand>
        <name>ATP</name>
        <dbReference type="ChEBI" id="CHEBI:30616"/>
    </ligand>
</feature>
<feature type="binding site" evidence="10 14 24">
    <location>
        <position position="49"/>
    </location>
    <ligand>
        <name>ATP</name>
        <dbReference type="ChEBI" id="CHEBI:30616"/>
    </ligand>
</feature>
<feature type="binding site" evidence="10 14">
    <location>
        <position position="50"/>
    </location>
    <ligand>
        <name>ATP</name>
        <dbReference type="ChEBI" id="CHEBI:30616"/>
    </ligand>
</feature>
<feature type="binding site" evidence="2 19">
    <location>
        <position position="50"/>
    </location>
    <ligand>
        <name>Mg(2+)</name>
        <dbReference type="ChEBI" id="CHEBI:18420"/>
        <label>A</label>
        <note>catalytic</note>
    </ligand>
</feature>
<feature type="binding site" evidence="2 19 20 21">
    <location>
        <position position="50"/>
    </location>
    <ligand>
        <name>Mg(2+)</name>
        <dbReference type="ChEBI" id="CHEBI:18420"/>
        <label>B</label>
    </ligand>
</feature>
<feature type="binding site" evidence="10 14 24">
    <location>
        <position position="52"/>
    </location>
    <ligand>
        <name>ATP</name>
        <dbReference type="ChEBI" id="CHEBI:30616"/>
    </ligand>
</feature>
<feature type="binding site" evidence="2 16 19 22 26">
    <location>
        <position position="52"/>
    </location>
    <ligand>
        <name>Mg(2+)</name>
        <dbReference type="ChEBI" id="CHEBI:18420"/>
        <label>A</label>
        <note>catalytic</note>
    </ligand>
</feature>
<feature type="binding site" evidence="2 19 20">
    <location>
        <position position="52"/>
    </location>
    <ligand>
        <name>Mg(2+)</name>
        <dbReference type="ChEBI" id="CHEBI:18420"/>
        <label>B</label>
    </ligand>
</feature>
<feature type="binding site" evidence="1 26">
    <location>
        <position position="52"/>
    </location>
    <ligand>
        <name>neomycin B</name>
        <dbReference type="ChEBI" id="CHEBI:87835"/>
    </ligand>
</feature>
<feature type="binding site" evidence="4 14">
    <location>
        <position position="67"/>
    </location>
    <ligand>
        <name>kanamycin A</name>
        <dbReference type="ChEBI" id="CHEBI:58214"/>
    </ligand>
</feature>
<feature type="binding site" evidence="26">
    <location>
        <position position="67"/>
    </location>
    <ligand>
        <name>neomycin B</name>
        <dbReference type="ChEBI" id="CHEBI:87835"/>
    </ligand>
</feature>
<feature type="binding site" evidence="4 14">
    <location>
        <position position="74"/>
    </location>
    <ligand>
        <name>kanamycin A</name>
        <dbReference type="ChEBI" id="CHEBI:58214"/>
    </ligand>
</feature>
<feature type="binding site" evidence="4 14">
    <location>
        <position position="76"/>
    </location>
    <ligand>
        <name>kanamycin A</name>
        <dbReference type="ChEBI" id="CHEBI:58214"/>
    </ligand>
</feature>
<feature type="binding site" evidence="4 14">
    <location>
        <position position="141"/>
    </location>
    <ligand>
        <name>kanamycin A</name>
        <dbReference type="ChEBI" id="CHEBI:58214"/>
    </ligand>
</feature>
<feature type="binding site" evidence="10 14 24">
    <location>
        <position position="145"/>
    </location>
    <ligand>
        <name>ATP</name>
        <dbReference type="ChEBI" id="CHEBI:30616"/>
    </ligand>
</feature>
<feature type="binding site" evidence="4 14">
    <location>
        <position position="145"/>
    </location>
    <ligand>
        <name>kanamycin A</name>
        <dbReference type="ChEBI" id="CHEBI:58214"/>
    </ligand>
</feature>
<feature type="binding site" evidence="2 18 19 21 22 23 26">
    <location>
        <position position="145"/>
    </location>
    <ligand>
        <name>Mg(2+)</name>
        <dbReference type="ChEBI" id="CHEBI:18420"/>
        <label>A</label>
        <note>catalytic</note>
    </ligand>
</feature>
<feature type="binding site" evidence="10 14 24">
    <location>
        <position position="149"/>
    </location>
    <ligand>
        <name>ATP</name>
        <dbReference type="ChEBI" id="CHEBI:30616"/>
    </ligand>
</feature>
<feature type="binding site" evidence="10 14">
    <location>
        <position position="187"/>
    </location>
    <ligand>
        <name>ATP</name>
        <dbReference type="ChEBI" id="CHEBI:30616"/>
    </ligand>
</feature>
<feature type="mutagenesis site" description="Weaker binding to neomycin, active in crystals; in association with K-130." evidence="2">
    <original>E</original>
    <variation>D</variation>
    <location>
        <position position="52"/>
    </location>
</feature>
<feature type="mutagenesis site" description="Increased thermostability, catalytic activity at 70 degrees Celsius; in association with K-130." evidence="5">
    <original>D</original>
    <variation>Y</variation>
    <location>
        <position position="80"/>
    </location>
</feature>
<feature type="mutagenesis site" description="Increased thermostability, catalytic activity at 70 degrees Celsius; in association with Y-80. Increased thermostability. Weaker binding to neomycin, active in crystals; in association with D-52." evidence="2 5">
    <original>T</original>
    <variation>K</variation>
    <location>
        <position position="130"/>
    </location>
</feature>
<feature type="helix" evidence="27">
    <location>
        <begin position="9"/>
        <end position="27"/>
    </location>
</feature>
<feature type="helix" evidence="27">
    <location>
        <begin position="28"/>
        <end position="30"/>
    </location>
</feature>
<feature type="strand" evidence="27">
    <location>
        <begin position="31"/>
        <end position="37"/>
    </location>
</feature>
<feature type="helix" evidence="27">
    <location>
        <begin position="38"/>
        <end position="41"/>
    </location>
</feature>
<feature type="strand" evidence="27">
    <location>
        <begin position="51"/>
        <end position="59"/>
    </location>
</feature>
<feature type="strand" evidence="27">
    <location>
        <begin position="63"/>
        <end position="69"/>
    </location>
</feature>
<feature type="strand" evidence="27">
    <location>
        <begin position="74"/>
        <end position="81"/>
    </location>
</feature>
<feature type="helix" evidence="27">
    <location>
        <begin position="82"/>
        <end position="90"/>
    </location>
</feature>
<feature type="helix" evidence="27">
    <location>
        <begin position="96"/>
        <end position="99"/>
    </location>
</feature>
<feature type="helix" evidence="27">
    <location>
        <begin position="100"/>
        <end position="104"/>
    </location>
</feature>
<feature type="strand" evidence="27">
    <location>
        <begin position="107"/>
        <end position="114"/>
    </location>
</feature>
<feature type="helix" evidence="27">
    <location>
        <begin position="115"/>
        <end position="124"/>
    </location>
</feature>
<feature type="helix" evidence="27">
    <location>
        <begin position="128"/>
        <end position="141"/>
    </location>
</feature>
<feature type="helix" evidence="27">
    <location>
        <begin position="143"/>
        <end position="156"/>
    </location>
</feature>
<feature type="helix" evidence="27">
    <location>
        <begin position="159"/>
        <end position="161"/>
    </location>
</feature>
<feature type="helix" evidence="27">
    <location>
        <begin position="162"/>
        <end position="181"/>
    </location>
</feature>
<feature type="helix" evidence="27">
    <location>
        <begin position="188"/>
        <end position="190"/>
    </location>
</feature>
<feature type="helix" evidence="27">
    <location>
        <begin position="191"/>
        <end position="196"/>
    </location>
</feature>
<feature type="strand" evidence="27">
    <location>
        <begin position="198"/>
        <end position="200"/>
    </location>
</feature>
<feature type="helix" evidence="27">
    <location>
        <begin position="205"/>
        <end position="214"/>
    </location>
</feature>
<feature type="helix" evidence="27">
    <location>
        <begin position="220"/>
        <end position="241"/>
    </location>
</feature>
<comment type="function">
    <text evidence="1 2 3">Inactivates aminoglycoside antibiotics such as kanamycin by catalyzing the transfer of a nucleotidyl group from a wide variety of nucleoside triphosphates ((d)ATP, (d)CTP, (d)GTP, ITP, TTP and (d)UTP) to the 4'-hydroxyl group of the aminoglycoside (PubMed:6090428, PubMed:21040710). In vitro, antibiotics without the 4'-hydroxyl but possessing a 4''-hydroxyl group (e.g. sisomicin and gentamicin) are also modifed but with poor specificity (PubMed:21040710). The 3' position of the NTP ribose ring does not tolerate large substitutions (e.g. ddATP) and dNTPs and TTP are better substrates than their NTP counterparts (PubMed:21040710). A short (2.35 Angstrom) hydrogen bond initially facilitates tight binding of the substrate (between Glu-52 and antibiotic) that is subsequently disrupted by the assembly of the active ternary complex. This enables the release of products post-catalysis, a 'catch and release' mechanism (PubMed:38250052).</text>
</comment>
<comment type="catalytic activity">
    <reaction evidence="1">
        <text>amikacin + ATP = 4'-adenylylamikacin + diphosphate</text>
        <dbReference type="Rhea" id="RHEA:83667"/>
        <dbReference type="ChEBI" id="CHEBI:30616"/>
        <dbReference type="ChEBI" id="CHEBI:33019"/>
        <dbReference type="ChEBI" id="CHEBI:84739"/>
        <dbReference type="ChEBI" id="CHEBI:233200"/>
    </reaction>
    <physiologicalReaction direction="left-to-right" evidence="1">
        <dbReference type="Rhea" id="RHEA:83668"/>
    </physiologicalReaction>
</comment>
<comment type="catalytic activity">
    <reaction evidence="1 3">
        <text>kanamycin A + ATP = 4'-adenylylkanamycin A + diphosphate</text>
        <dbReference type="Rhea" id="RHEA:83671"/>
        <dbReference type="ChEBI" id="CHEBI:30616"/>
        <dbReference type="ChEBI" id="CHEBI:33019"/>
        <dbReference type="ChEBI" id="CHEBI:58214"/>
        <dbReference type="ChEBI" id="CHEBI:233199"/>
    </reaction>
    <physiologicalReaction direction="left-to-right" evidence="1">
        <dbReference type="Rhea" id="RHEA:83672"/>
    </physiologicalReaction>
</comment>
<comment type="catalytic activity">
    <reaction evidence="1 2">
        <text>neomycin B + ATP = 4'-adenylylneomycin B + diphosphate</text>
        <dbReference type="Rhea" id="RHEA:83675"/>
        <dbReference type="ChEBI" id="CHEBI:30616"/>
        <dbReference type="ChEBI" id="CHEBI:33019"/>
        <dbReference type="ChEBI" id="CHEBI:87835"/>
        <dbReference type="ChEBI" id="CHEBI:233201"/>
    </reaction>
    <physiologicalReaction direction="left-to-right" evidence="1">
        <dbReference type="Rhea" id="RHEA:83676"/>
    </physiologicalReaction>
</comment>
<comment type="catalytic activity">
    <reaction evidence="1">
        <text>paromomycin + ATP = 4'-adenylylparomomycin + diphosphate</text>
        <dbReference type="Rhea" id="RHEA:83679"/>
        <dbReference type="ChEBI" id="CHEBI:30616"/>
        <dbReference type="ChEBI" id="CHEBI:33019"/>
        <dbReference type="ChEBI" id="CHEBI:233202"/>
        <dbReference type="ChEBI" id="CHEBI:233203"/>
    </reaction>
    <physiologicalReaction direction="right-to-left" evidence="1">
        <dbReference type="Rhea" id="RHEA:83681"/>
    </physiologicalReaction>
</comment>
<comment type="catalytic activity">
    <reaction evidence="1">
        <text>ribostamycin + ATP = 4'-adenylylribostamycin + diphosphate</text>
        <dbReference type="Rhea" id="RHEA:83683"/>
        <dbReference type="ChEBI" id="CHEBI:30616"/>
        <dbReference type="ChEBI" id="CHEBI:33019"/>
        <dbReference type="ChEBI" id="CHEBI:65028"/>
        <dbReference type="ChEBI" id="CHEBI:233204"/>
    </reaction>
</comment>
<comment type="catalytic activity">
    <reaction evidence="1">
        <text>tobramycin + ATP = 4'-adenylyltobramycin + diphosphate</text>
        <dbReference type="Rhea" id="RHEA:83687"/>
        <dbReference type="ChEBI" id="CHEBI:30616"/>
        <dbReference type="ChEBI" id="CHEBI:33019"/>
        <dbReference type="ChEBI" id="CHEBI:73678"/>
        <dbReference type="ChEBI" id="CHEBI:233205"/>
    </reaction>
</comment>
<comment type="catalytic activity">
    <reaction evidence="1">
        <text>kanamycin A + CTP = 4'-cytidylylkanamycin A + diphosphate</text>
        <dbReference type="Rhea" id="RHEA:83691"/>
        <dbReference type="ChEBI" id="CHEBI:33019"/>
        <dbReference type="ChEBI" id="CHEBI:37563"/>
        <dbReference type="ChEBI" id="CHEBI:58214"/>
        <dbReference type="ChEBI" id="CHEBI:233206"/>
    </reaction>
</comment>
<comment type="catalytic activity">
    <reaction evidence="1">
        <text>kanamycin A + GTP = 4'-guanylylkanamycin A + diphosphate</text>
        <dbReference type="Rhea" id="RHEA:83695"/>
        <dbReference type="ChEBI" id="CHEBI:33019"/>
        <dbReference type="ChEBI" id="CHEBI:37565"/>
        <dbReference type="ChEBI" id="CHEBI:58214"/>
        <dbReference type="ChEBI" id="CHEBI:233207"/>
    </reaction>
</comment>
<comment type="catalytic activity">
    <reaction evidence="1">
        <text>kanamycin A + ITP = 4'-inosinylylkanamycin A + diphosphate</text>
        <dbReference type="Rhea" id="RHEA:83699"/>
        <dbReference type="ChEBI" id="CHEBI:33019"/>
        <dbReference type="ChEBI" id="CHEBI:58214"/>
        <dbReference type="ChEBI" id="CHEBI:61402"/>
        <dbReference type="ChEBI" id="CHEBI:233208"/>
    </reaction>
</comment>
<comment type="catalytic activity">
    <reaction evidence="1">
        <text>dTTP + kanamycin A = 4'-thymidylylkanamycin A + diphosphate</text>
        <dbReference type="Rhea" id="RHEA:83703"/>
        <dbReference type="ChEBI" id="CHEBI:33019"/>
        <dbReference type="ChEBI" id="CHEBI:37568"/>
        <dbReference type="ChEBI" id="CHEBI:58214"/>
        <dbReference type="ChEBI" id="CHEBI:233209"/>
    </reaction>
</comment>
<comment type="catalytic activity">
    <reaction evidence="1">
        <text>kanamycin A + UTP = 4'-uridylylkanamycin A + diphosphate</text>
        <dbReference type="Rhea" id="RHEA:83707"/>
        <dbReference type="ChEBI" id="CHEBI:33019"/>
        <dbReference type="ChEBI" id="CHEBI:46398"/>
        <dbReference type="ChEBI" id="CHEBI:58214"/>
        <dbReference type="ChEBI" id="CHEBI:233210"/>
    </reaction>
</comment>
<comment type="catalytic activity">
    <reaction evidence="1">
        <text>kanamycin A + dATP = 4'-(2'-deoxyadenylyl)kanamycin A + diphosphate</text>
        <dbReference type="Rhea" id="RHEA:83711"/>
        <dbReference type="ChEBI" id="CHEBI:33019"/>
        <dbReference type="ChEBI" id="CHEBI:58214"/>
        <dbReference type="ChEBI" id="CHEBI:61404"/>
        <dbReference type="ChEBI" id="CHEBI:233246"/>
    </reaction>
</comment>
<comment type="catalytic activity">
    <reaction evidence="1">
        <text>kanamycin A + dCTP = 4'-(2'-deoxycytidylyl)kanamycin A + diphosphate</text>
        <dbReference type="Rhea" id="RHEA:83715"/>
        <dbReference type="ChEBI" id="CHEBI:33019"/>
        <dbReference type="ChEBI" id="CHEBI:58214"/>
        <dbReference type="ChEBI" id="CHEBI:61481"/>
        <dbReference type="ChEBI" id="CHEBI:233247"/>
    </reaction>
</comment>
<comment type="catalytic activity">
    <reaction evidence="1">
        <text>kanamycin A + dGTP = 4'-(2'-deoxyguanylyl)kanamycin A + diphosphate</text>
        <dbReference type="Rhea" id="RHEA:83719"/>
        <dbReference type="ChEBI" id="CHEBI:33019"/>
        <dbReference type="ChEBI" id="CHEBI:58214"/>
        <dbReference type="ChEBI" id="CHEBI:61429"/>
        <dbReference type="ChEBI" id="CHEBI:233248"/>
    </reaction>
</comment>
<comment type="catalytic activity">
    <reaction evidence="1">
        <text>dUTP + kanamycin A = 4'-(2'-deoxyuridylyl)kanamycin A + diphosphate</text>
        <dbReference type="Rhea" id="RHEA:83723"/>
        <dbReference type="ChEBI" id="CHEBI:33019"/>
        <dbReference type="ChEBI" id="CHEBI:58214"/>
        <dbReference type="ChEBI" id="CHEBI:61555"/>
        <dbReference type="ChEBI" id="CHEBI:233249"/>
    </reaction>
</comment>
<comment type="catalytic activity">
    <reaction evidence="1">
        <text>amikacin + GTP = 4'-guanylylamikacin + diphosphate</text>
        <dbReference type="Rhea" id="RHEA:83727"/>
        <dbReference type="ChEBI" id="CHEBI:33019"/>
        <dbReference type="ChEBI" id="CHEBI:37565"/>
        <dbReference type="ChEBI" id="CHEBI:84739"/>
        <dbReference type="ChEBI" id="CHEBI:233257"/>
    </reaction>
</comment>
<comment type="catalytic activity">
    <reaction evidence="1">
        <text>amikacin + ITP = 4'-inosinylylamikacin + diphosphate</text>
        <dbReference type="Rhea" id="RHEA:83731"/>
        <dbReference type="ChEBI" id="CHEBI:33019"/>
        <dbReference type="ChEBI" id="CHEBI:61402"/>
        <dbReference type="ChEBI" id="CHEBI:84739"/>
        <dbReference type="ChEBI" id="CHEBI:233259"/>
    </reaction>
</comment>
<comment type="catalytic activity">
    <reaction evidence="1">
        <text>amikacin + CTP = 4'-cytidylylamikacin + diphosphate</text>
        <dbReference type="Rhea" id="RHEA:83735"/>
        <dbReference type="ChEBI" id="CHEBI:33019"/>
        <dbReference type="ChEBI" id="CHEBI:37563"/>
        <dbReference type="ChEBI" id="CHEBI:84739"/>
        <dbReference type="ChEBI" id="CHEBI:233260"/>
    </reaction>
</comment>
<comment type="catalytic activity">
    <reaction evidence="1">
        <text>amikacin + UTP = 4'-uridylylamikacin + diphosphate</text>
        <dbReference type="Rhea" id="RHEA:83739"/>
        <dbReference type="ChEBI" id="CHEBI:33019"/>
        <dbReference type="ChEBI" id="CHEBI:46398"/>
        <dbReference type="ChEBI" id="CHEBI:84739"/>
        <dbReference type="ChEBI" id="CHEBI:233261"/>
    </reaction>
</comment>
<comment type="catalytic activity">
    <reaction evidence="1">
        <text>amikacin + dTTP = 4'-thymidylylamikacin + diphosphate</text>
        <dbReference type="Rhea" id="RHEA:83743"/>
        <dbReference type="ChEBI" id="CHEBI:33019"/>
        <dbReference type="ChEBI" id="CHEBI:37568"/>
        <dbReference type="ChEBI" id="CHEBI:84739"/>
        <dbReference type="ChEBI" id="CHEBI:233262"/>
    </reaction>
</comment>
<comment type="cofactor">
    <cofactor evidence="2 19">
        <name>Mg(2+)</name>
        <dbReference type="ChEBI" id="CHEBI:18420"/>
    </cofactor>
    <text evidence="2 18 19 21 22 23 26">Binds 1 or 2 Mg(2+) per subunit depending on the catalytic state, the liganding residues shift as catalysis proceeds.</text>
</comment>
<comment type="biophysicochemical properties">
    <kinetics>
        <KM evidence="1">5.71 uM for amikacin with ATP</KM>
        <KM evidence="1">171 uM for gentamicin with ATP</KM>
        <KM evidence="1">6.13 uM for kanamycin A with ATP</KM>
        <KM evidence="1">4.36 uM for neomycin B with ATP</KM>
        <KM evidence="1">5.51 uM for paromomycin with ATP</KM>
        <KM evidence="1">5.6 uM for ribostamycin with ATP</KM>
        <KM evidence="1">59.8 uM for sisomicin with ATP</KM>
        <KM evidence="1">1.48 uM for tobramycin with ATP</KM>
        <KM evidence="1">1370 uM for ATP with kanamycin A</KM>
        <KM evidence="1">423 uM for CTP with kanamycin A</KM>
        <KM evidence="1">769 uM for dATP with kanamycin A</KM>
        <KM evidence="1">736 uM for dCTP with kanamycin A</KM>
        <KM evidence="1">710 uM for dGTP with kanamycin A</KM>
        <KM evidence="1">292 uM for dUTP with kanamycin A</KM>
        <KM evidence="1">1160 uM for GTP with kanamycin A</KM>
        <KM evidence="1">500 uM for ITP with kanamycin A</KM>
        <KM evidence="1">350 uM for TTP with kanamycin A</KM>
        <KM evidence="1">2410 uM for UTP with kanamycin A</KM>
        <text evidence="1">kcat is 111 min(-1) for amikacin with ATP. kcat is 136 min(-1) for gentamicin with ATP. kcat is 135 min(-1) for kanamycin A with ATP. kcat is 137 min(-1) for neomycin B with ATP. kcat is 130 min(-1) for paromomycin with ATP. kcat is 215 min(-1) for ribostamycin with ATP. kcat is 39 min(-1) for sisomicin with ATP. kcat is 285 min(-1) for tobramycin with ATP.</text>
    </kinetics>
    <temperatureDependence>
        <text evidence="3">Thermostable at 50 degrees Celsius for about 14 minutes, at 55 degrees Celsius for about 2 minutes.</text>
    </temperatureDependence>
</comment>
<comment type="subunit">
    <text evidence="4 5">Homodimer (PubMed:8218273, PubMed:7577914).</text>
</comment>
<comment type="domain">
    <text evidence="4 5">Bilobed; the N-terminus has a 5-strand beta-pleated sheet while the C-terminus is a helical bundle (PubMed:8218273, PubMed:7577914).</text>
</comment>
<comment type="miscellaneous">
    <text evidence="9">Although some of the cross-references in (Ref.9 and PubMed:38250052) are mapped to other bacteria, they are probably all derived from the gene originally encoded on plasmid pUB110 in S.aureus (Probable).</text>
</comment>
<gene>
    <name type="primary">knt</name>
    <name evidence="8" type="synonym">kan</name>
</gene>
<sequence length="253" mass="28798">MNGPIIMTREERMKIVHEIKERILDKYGDDVKAIGVYGSLGRQTDGPYSDIEMMCVMSTEEAEFSHEWTTGEWKVEVNFDSEEILLDYASQVESDWPLTHGQFFSILPIYDSGGYLEKVYQTAKSVEAQTFHDAICALIVEELFEYAGKWRNIRVQGPTTFLPSLTVQVAMAGAMLIGLHHRICYTTSASVLTEAVKQSDLPSGYDHLCQFVMSGQLSDSEKLLESLENFWNGIQEWTERHGYIVDVSKRIPF</sequence>
<accession>P05057</accession>
<name>KANU_STAAU</name>
<proteinExistence type="evidence at protein level"/>
<dbReference type="EC" id="2.7.7.-" evidence="1 2 3"/>
<dbReference type="EMBL" id="X03408">
    <property type="protein sequence ID" value="CAA27142.1"/>
    <property type="molecule type" value="Genomic_DNA"/>
</dbReference>
<dbReference type="EMBL" id="M37273">
    <property type="protein sequence ID" value="AAA98214.1"/>
    <property type="molecule type" value="Genomic_DNA"/>
</dbReference>
<dbReference type="EMBL" id="M19465">
    <property type="protein sequence ID" value="AAA88361.1"/>
    <property type="molecule type" value="Genomic_DNA"/>
</dbReference>
<dbReference type="RefSeq" id="NP_040433.1">
    <property type="nucleotide sequence ID" value="NC_001384.1"/>
</dbReference>
<dbReference type="RefSeq" id="YP_006937662.1">
    <property type="nucleotide sequence ID" value="NC_013320.1"/>
</dbReference>
<dbReference type="RefSeq" id="YP_006938491.1">
    <property type="nucleotide sequence ID" value="NC_013342.1"/>
</dbReference>
<dbReference type="PDB" id="1KAN">
    <property type="method" value="X-ray"/>
    <property type="resolution" value="3.00 A"/>
    <property type="chains" value="A/B=1-253"/>
</dbReference>
<dbReference type="PDB" id="1KNY">
    <property type="method" value="X-ray"/>
    <property type="resolution" value="2.50 A"/>
    <property type="chains" value="A/B=1-253"/>
</dbReference>
<dbReference type="PDB" id="6NLT">
    <property type="method" value="X-ray"/>
    <property type="resolution" value="1.90 A"/>
    <property type="chains" value="A/B=1-253"/>
</dbReference>
<dbReference type="PDB" id="6NMK">
    <property type="method" value="X-ray"/>
    <property type="resolution" value="1.94 A"/>
    <property type="chains" value="A/B=1-253"/>
</dbReference>
<dbReference type="PDB" id="6NML">
    <property type="method" value="X-ray"/>
    <property type="resolution" value="2.00 A"/>
    <property type="chains" value="A/B=1-253"/>
</dbReference>
<dbReference type="PDB" id="6NMM">
    <property type="method" value="X-ray"/>
    <property type="resolution" value="2.50 A"/>
    <property type="chains" value="A/B/C/D=1-253"/>
</dbReference>
<dbReference type="PDB" id="6NMN">
    <property type="method" value="X-ray"/>
    <property type="resolution" value="1.80 A"/>
    <property type="chains" value="A/B=1-253"/>
</dbReference>
<dbReference type="PDB" id="6P01">
    <property type="method" value="X-ray"/>
    <property type="resolution" value="1.89 A"/>
    <property type="chains" value="A/B=1-253"/>
</dbReference>
<dbReference type="PDB" id="6P04">
    <property type="method" value="X-ray"/>
    <property type="resolution" value="2.30 A"/>
    <property type="chains" value="A/B=1-253"/>
</dbReference>
<dbReference type="PDB" id="6P06">
    <property type="method" value="X-ray"/>
    <property type="resolution" value="2.30 A"/>
    <property type="chains" value="A/B=1-253"/>
</dbReference>
<dbReference type="PDB" id="6P08">
    <property type="method" value="X-ray"/>
    <property type="resolution" value="2.27 A"/>
    <property type="chains" value="A/D=1-253"/>
</dbReference>
<dbReference type="PDB" id="6UN8">
    <property type="method" value="X-ray"/>
    <property type="resolution" value="1.65 A"/>
    <property type="chains" value="A/B=1-253"/>
</dbReference>
<dbReference type="PDBsum" id="1KAN"/>
<dbReference type="PDBsum" id="1KNY"/>
<dbReference type="PDBsum" id="6NLT"/>
<dbReference type="PDBsum" id="6NMK"/>
<dbReference type="PDBsum" id="6NML"/>
<dbReference type="PDBsum" id="6NMM"/>
<dbReference type="PDBsum" id="6NMN"/>
<dbReference type="PDBsum" id="6P01"/>
<dbReference type="PDBsum" id="6P04"/>
<dbReference type="PDBsum" id="6P06"/>
<dbReference type="PDBsum" id="6P08"/>
<dbReference type="PDBsum" id="6UN8"/>
<dbReference type="SMR" id="P05057"/>
<dbReference type="DrugBank" id="DB01172">
    <property type="generic name" value="Kanamycin"/>
</dbReference>
<dbReference type="KEGG" id="ag:AAA88361"/>
<dbReference type="EvolutionaryTrace" id="P05057"/>
<dbReference type="GO" id="GO:0016779">
    <property type="term" value="F:nucleotidyltransferase activity"/>
    <property type="evidence" value="ECO:0007669"/>
    <property type="project" value="InterPro"/>
</dbReference>
<dbReference type="GO" id="GO:0046677">
    <property type="term" value="P:response to antibiotic"/>
    <property type="evidence" value="ECO:0007669"/>
    <property type="project" value="UniProtKB-KW"/>
</dbReference>
<dbReference type="CDD" id="cd05397">
    <property type="entry name" value="NT_Pol-beta-like"/>
    <property type="match status" value="1"/>
</dbReference>
<dbReference type="Gene3D" id="3.30.460.10">
    <property type="entry name" value="Beta Polymerase, domain 2"/>
    <property type="match status" value="1"/>
</dbReference>
<dbReference type="Gene3D" id="1.20.120.330">
    <property type="entry name" value="Nucleotidyltransferases domain 2"/>
    <property type="match status" value="1"/>
</dbReference>
<dbReference type="InterPro" id="IPR012481">
    <property type="entry name" value="KNTase_C"/>
</dbReference>
<dbReference type="InterPro" id="IPR043519">
    <property type="entry name" value="NT_sf"/>
</dbReference>
<dbReference type="NCBIfam" id="NF033061">
    <property type="entry name" value="ANT_4p_I"/>
    <property type="match status" value="1"/>
</dbReference>
<dbReference type="NCBIfam" id="NF000181">
    <property type="entry name" value="ANT_4p_Ia"/>
    <property type="match status" value="1"/>
</dbReference>
<dbReference type="Pfam" id="PF07827">
    <property type="entry name" value="KNTase_C"/>
    <property type="match status" value="1"/>
</dbReference>
<dbReference type="SUPFAM" id="SSF81301">
    <property type="entry name" value="Nucleotidyltransferase"/>
    <property type="match status" value="1"/>
</dbReference>
<dbReference type="SUPFAM" id="SSF81593">
    <property type="entry name" value="Nucleotidyltransferase substrate binding subunit/domain"/>
    <property type="match status" value="1"/>
</dbReference>
<organism>
    <name type="scientific">Staphylococcus aureus</name>
    <dbReference type="NCBI Taxonomy" id="1280"/>
    <lineage>
        <taxon>Bacteria</taxon>
        <taxon>Bacillati</taxon>
        <taxon>Bacillota</taxon>
        <taxon>Bacilli</taxon>
        <taxon>Bacillales</taxon>
        <taxon>Staphylococcaceae</taxon>
        <taxon>Staphylococcus</taxon>
    </lineage>
</organism>
<keyword id="KW-0002">3D-structure</keyword>
<keyword id="KW-0046">Antibiotic resistance</keyword>
<keyword id="KW-0067">ATP-binding</keyword>
<keyword id="KW-0903">Direct protein sequencing</keyword>
<keyword id="KW-0547">Nucleotide-binding</keyword>
<keyword id="KW-0614">Plasmid</keyword>
<keyword id="KW-0808">Transferase</keyword>